<name>EXOA_RHIME</name>
<reference key="1">
    <citation type="journal article" date="1993" name="J. Bacteriol.">
        <title>Family of glycosyl transferases needed for the synthesis of succinoglycan by Rhizobium meliloti.</title>
        <authorList>
            <person name="Glucksmann M.A."/>
            <person name="Reuber T.L."/>
            <person name="Walker G.C."/>
        </authorList>
    </citation>
    <scope>NUCLEOTIDE SEQUENCE [GENOMIC DNA]</scope>
    <source>
        <strain>1021</strain>
    </source>
</reference>
<reference key="2">
    <citation type="journal article" date="1993" name="Mol. Gen. Genet.">
        <title>Identification and analysis of the Rhizobium meliloti exoAMONP genes involved in exopolysaccharide biosynthesis and mapping of promoters located on the exoHKLAMONP fragment.</title>
        <authorList>
            <person name="Becker A."/>
            <person name="Kleickmann A."/>
            <person name="Keller M."/>
            <person name="Arnold W."/>
            <person name="Puehler A."/>
        </authorList>
    </citation>
    <scope>NUCLEOTIDE SEQUENCE [GENOMIC DNA]</scope>
    <source>
        <strain>RCR2011 / SU47</strain>
    </source>
</reference>
<reference key="3">
    <citation type="journal article" date="2001" name="Proc. Natl. Acad. Sci. U.S.A.">
        <title>The complete sequence of the 1,683-kb pSymB megaplasmid from the N2-fixing endosymbiont Sinorhizobium meliloti.</title>
        <authorList>
            <person name="Finan T.M."/>
            <person name="Weidner S."/>
            <person name="Wong K."/>
            <person name="Buhrmester J."/>
            <person name="Chain P."/>
            <person name="Vorhoelter F.J."/>
            <person name="Hernandez-Lucas I."/>
            <person name="Becker A."/>
            <person name="Cowie A."/>
            <person name="Gouzy J."/>
            <person name="Golding B."/>
            <person name="Puehler A."/>
        </authorList>
    </citation>
    <scope>NUCLEOTIDE SEQUENCE [LARGE SCALE GENOMIC DNA]</scope>
    <source>
        <strain>1021</strain>
    </source>
</reference>
<reference key="4">
    <citation type="journal article" date="2001" name="Science">
        <title>The composite genome of the legume symbiont Sinorhizobium meliloti.</title>
        <authorList>
            <person name="Galibert F."/>
            <person name="Finan T.M."/>
            <person name="Long S.R."/>
            <person name="Puehler A."/>
            <person name="Abola P."/>
            <person name="Ampe F."/>
            <person name="Barloy-Hubler F."/>
            <person name="Barnett M.J."/>
            <person name="Becker A."/>
            <person name="Boistard P."/>
            <person name="Bothe G."/>
            <person name="Boutry M."/>
            <person name="Bowser L."/>
            <person name="Buhrmester J."/>
            <person name="Cadieu E."/>
            <person name="Capela D."/>
            <person name="Chain P."/>
            <person name="Cowie A."/>
            <person name="Davis R.W."/>
            <person name="Dreano S."/>
            <person name="Federspiel N.A."/>
            <person name="Fisher R.F."/>
            <person name="Gloux S."/>
            <person name="Godrie T."/>
            <person name="Goffeau A."/>
            <person name="Golding B."/>
            <person name="Gouzy J."/>
            <person name="Gurjal M."/>
            <person name="Hernandez-Lucas I."/>
            <person name="Hong A."/>
            <person name="Huizar L."/>
            <person name="Hyman R.W."/>
            <person name="Jones T."/>
            <person name="Kahn D."/>
            <person name="Kahn M.L."/>
            <person name="Kalman S."/>
            <person name="Keating D.H."/>
            <person name="Kiss E."/>
            <person name="Komp C."/>
            <person name="Lelaure V."/>
            <person name="Masuy D."/>
            <person name="Palm C."/>
            <person name="Peck M.C."/>
            <person name="Pohl T.M."/>
            <person name="Portetelle D."/>
            <person name="Purnelle B."/>
            <person name="Ramsperger U."/>
            <person name="Surzycki R."/>
            <person name="Thebault P."/>
            <person name="Vandenbol M."/>
            <person name="Vorhoelter F.J."/>
            <person name="Weidner S."/>
            <person name="Wells D.H."/>
            <person name="Wong K."/>
            <person name="Yeh K.-C."/>
            <person name="Batut J."/>
        </authorList>
    </citation>
    <scope>NUCLEOTIDE SEQUENCE [LARGE SCALE GENOMIC DNA]</scope>
    <source>
        <strain>1021</strain>
    </source>
</reference>
<feature type="chain" id="PRO_0000059181" description="Succinoglycan biosynthesis protein ExoA">
    <location>
        <begin position="1"/>
        <end position="330"/>
    </location>
</feature>
<feature type="transmembrane region" description="Helical" evidence="1">
    <location>
        <begin position="116"/>
        <end position="136"/>
    </location>
</feature>
<feature type="transmembrane region" description="Helical" evidence="1">
    <location>
        <begin position="260"/>
        <end position="280"/>
    </location>
</feature>
<feature type="transmembrane region" description="Helical" evidence="1">
    <location>
        <begin position="299"/>
        <end position="319"/>
    </location>
</feature>
<evidence type="ECO:0000255" key="1"/>
<evidence type="ECO:0000305" key="2"/>
<organism>
    <name type="scientific">Rhizobium meliloti (strain 1021)</name>
    <name type="common">Ensifer meliloti</name>
    <name type="synonym">Sinorhizobium meliloti</name>
    <dbReference type="NCBI Taxonomy" id="266834"/>
    <lineage>
        <taxon>Bacteria</taxon>
        <taxon>Pseudomonadati</taxon>
        <taxon>Pseudomonadota</taxon>
        <taxon>Alphaproteobacteria</taxon>
        <taxon>Hyphomicrobiales</taxon>
        <taxon>Rhizobiaceae</taxon>
        <taxon>Sinorhizobium/Ensifer group</taxon>
        <taxon>Sinorhizobium</taxon>
    </lineage>
</organism>
<geneLocation type="plasmid">
    <name>pSymB</name>
    <name>megaplasmid 2</name>
</geneLocation>
<protein>
    <recommendedName>
        <fullName>Succinoglycan biosynthesis protein ExoA</fullName>
        <ecNumber>2.4.-.-</ecNumber>
    </recommendedName>
</protein>
<gene>
    <name type="primary">exoA</name>
    <name type="ordered locus">RB1082</name>
    <name type="ORF">SMb20957</name>
</gene>
<comment type="function">
    <text>Glycosyltransferase required for the synthesis of succinoglycan (EPS I). Needed for the addition of the second sugar (glucose). Catalyzes the formation of a beta-1,3 linkage with the galactose lipid carrier.</text>
</comment>
<comment type="pathway">
    <text>Glycan metabolism; exopolysaccharide biosynthesis.</text>
</comment>
<comment type="subcellular location">
    <subcellularLocation>
        <location>Cell membrane</location>
        <topology>Multi-pass membrane protein</topology>
    </subcellularLocation>
</comment>
<comment type="similarity">
    <text evidence="2">Belongs to the glycosyltransferase 2 family.</text>
</comment>
<accession>P33691</accession>
<dbReference type="EC" id="2.4.-.-"/>
<dbReference type="EMBL" id="L20758">
    <property type="protein sequence ID" value="AAA16046.1"/>
    <property type="molecule type" value="Unassigned_DNA"/>
</dbReference>
<dbReference type="EMBL" id="Z22636">
    <property type="protein sequence ID" value="CAA80345.1"/>
    <property type="molecule type" value="Genomic_DNA"/>
</dbReference>
<dbReference type="EMBL" id="AL591985">
    <property type="protein sequence ID" value="CAC49482.1"/>
    <property type="molecule type" value="Genomic_DNA"/>
</dbReference>
<dbReference type="PIR" id="A49348">
    <property type="entry name" value="A49348"/>
</dbReference>
<dbReference type="PIR" id="B95977">
    <property type="entry name" value="B95977"/>
</dbReference>
<dbReference type="PIR" id="S39956">
    <property type="entry name" value="S39956"/>
</dbReference>
<dbReference type="RefSeq" id="NP_437622.1">
    <property type="nucleotide sequence ID" value="NC_003078.1"/>
</dbReference>
<dbReference type="RefSeq" id="WP_004434899.1">
    <property type="nucleotide sequence ID" value="NC_003078.1"/>
</dbReference>
<dbReference type="SMR" id="P33691"/>
<dbReference type="CAZy" id="GT2">
    <property type="family name" value="Glycosyltransferase Family 2"/>
</dbReference>
<dbReference type="EnsemblBacteria" id="CAC49482">
    <property type="protein sequence ID" value="CAC49482"/>
    <property type="gene ID" value="SM_b20957"/>
</dbReference>
<dbReference type="GeneID" id="89577819"/>
<dbReference type="KEGG" id="sme:SM_b20957"/>
<dbReference type="PATRIC" id="fig|266834.11.peg.6010"/>
<dbReference type="eggNOG" id="COG1215">
    <property type="taxonomic scope" value="Bacteria"/>
</dbReference>
<dbReference type="HOGENOM" id="CLU_025996_19_0_5"/>
<dbReference type="OrthoDB" id="8416156at2"/>
<dbReference type="BioCyc" id="MetaCyc:SM_B20957-MONOMER"/>
<dbReference type="UniPathway" id="UPA00631"/>
<dbReference type="PRO" id="PR:P33691"/>
<dbReference type="Proteomes" id="UP000001976">
    <property type="component" value="Plasmid pSymB"/>
</dbReference>
<dbReference type="GO" id="GO:0005886">
    <property type="term" value="C:plasma membrane"/>
    <property type="evidence" value="ECO:0007669"/>
    <property type="project" value="UniProtKB-SubCell"/>
</dbReference>
<dbReference type="GO" id="GO:0016757">
    <property type="term" value="F:glycosyltransferase activity"/>
    <property type="evidence" value="ECO:0007669"/>
    <property type="project" value="UniProtKB-KW"/>
</dbReference>
<dbReference type="GO" id="GO:0000271">
    <property type="term" value="P:polysaccharide biosynthetic process"/>
    <property type="evidence" value="ECO:0007669"/>
    <property type="project" value="UniProtKB-KW"/>
</dbReference>
<dbReference type="CDD" id="cd02525">
    <property type="entry name" value="Succinoglycan_BP_ExoA"/>
    <property type="match status" value="1"/>
</dbReference>
<dbReference type="Gene3D" id="3.90.550.10">
    <property type="entry name" value="Spore Coat Polysaccharide Biosynthesis Protein SpsA, Chain A"/>
    <property type="match status" value="1"/>
</dbReference>
<dbReference type="InterPro" id="IPR001173">
    <property type="entry name" value="Glyco_trans_2-like"/>
</dbReference>
<dbReference type="InterPro" id="IPR029044">
    <property type="entry name" value="Nucleotide-diphossugar_trans"/>
</dbReference>
<dbReference type="PANTHER" id="PTHR43646">
    <property type="entry name" value="GLYCOSYLTRANSFERASE"/>
    <property type="match status" value="1"/>
</dbReference>
<dbReference type="PANTHER" id="PTHR43646:SF2">
    <property type="entry name" value="GLYCOSYLTRANSFERASE 2-LIKE DOMAIN-CONTAINING PROTEIN"/>
    <property type="match status" value="1"/>
</dbReference>
<dbReference type="Pfam" id="PF00535">
    <property type="entry name" value="Glycos_transf_2"/>
    <property type="match status" value="1"/>
</dbReference>
<dbReference type="SUPFAM" id="SSF53448">
    <property type="entry name" value="Nucleotide-diphospho-sugar transferases"/>
    <property type="match status" value="1"/>
</dbReference>
<keyword id="KW-1003">Cell membrane</keyword>
<keyword id="KW-0270">Exopolysaccharide synthesis</keyword>
<keyword id="KW-0328">Glycosyltransferase</keyword>
<keyword id="KW-0472">Membrane</keyword>
<keyword id="KW-0614">Plasmid</keyword>
<keyword id="KW-1185">Reference proteome</keyword>
<keyword id="KW-0808">Transferase</keyword>
<keyword id="KW-0812">Transmembrane</keyword>
<keyword id="KW-1133">Transmembrane helix</keyword>
<sequence>MSSDELTSTSSLIVIPCLNEASHIEALIEKLRPSLTPLNARVVIADGGSTDGTREIARRLATEDPRVLFLDNPKRIQSAAVNRAVAELGAGSDYLIRIDAHGTYPDDYCERLVEDALATGADSVVVAMQTVGFSTFQKATAFAQNSKLGNGGSKHRTGAVGHWAEHGHHALMRIEAFKAVGGYDESFSHNEDAELDYRLGKAGYRIWMTDKTSMVYYPRAKLVPLFWQYFGYGRGRAKNFLKHRAMPGLRQMLPLAVAPIAFGALLAIVNWMAVVPVGVWAAACLGYGVWMALGQRNPYGPLAAVAAMVMHLAWSAGFWRELLDFRRRVA</sequence>
<proteinExistence type="inferred from homology"/>